<comment type="function">
    <text evidence="1">Catalyzes the irreversible cleavage of the glycosidic bond in both 5'-methylthioadenosine (MTA) and S-adenosylhomocysteine (SAH/AdoHcy) to adenine and the corresponding thioribose, 5'-methylthioribose and S-ribosylhomocysteine, respectively. Also cleaves 5'-deoxyadenosine, a toxic by-product of radical S-adenosylmethionine (SAM) enzymes, into 5-deoxyribose and adenine. Thus, is required for in vivo function of the radical SAM enzymes biotin synthase and lipoic acid synthase, that are inhibited by 5'-deoxyadenosine accumulation.</text>
</comment>
<comment type="catalytic activity">
    <reaction evidence="1">
        <text>S-adenosyl-L-homocysteine + H2O = S-(5-deoxy-D-ribos-5-yl)-L-homocysteine + adenine</text>
        <dbReference type="Rhea" id="RHEA:17805"/>
        <dbReference type="ChEBI" id="CHEBI:15377"/>
        <dbReference type="ChEBI" id="CHEBI:16708"/>
        <dbReference type="ChEBI" id="CHEBI:57856"/>
        <dbReference type="ChEBI" id="CHEBI:58195"/>
        <dbReference type="EC" id="3.2.2.9"/>
    </reaction>
</comment>
<comment type="catalytic activity">
    <reaction evidence="1">
        <text>S-methyl-5'-thioadenosine + H2O = 5-(methylsulfanyl)-D-ribose + adenine</text>
        <dbReference type="Rhea" id="RHEA:13617"/>
        <dbReference type="ChEBI" id="CHEBI:15377"/>
        <dbReference type="ChEBI" id="CHEBI:16708"/>
        <dbReference type="ChEBI" id="CHEBI:17509"/>
        <dbReference type="ChEBI" id="CHEBI:78440"/>
        <dbReference type="EC" id="3.2.2.9"/>
    </reaction>
</comment>
<comment type="catalytic activity">
    <reaction evidence="1">
        <text>5'-deoxyadenosine + H2O = 5-deoxy-D-ribose + adenine</text>
        <dbReference type="Rhea" id="RHEA:29859"/>
        <dbReference type="ChEBI" id="CHEBI:15377"/>
        <dbReference type="ChEBI" id="CHEBI:16708"/>
        <dbReference type="ChEBI" id="CHEBI:17319"/>
        <dbReference type="ChEBI" id="CHEBI:149540"/>
        <dbReference type="EC" id="3.2.2.9"/>
    </reaction>
    <physiologicalReaction direction="left-to-right" evidence="1">
        <dbReference type="Rhea" id="RHEA:29860"/>
    </physiologicalReaction>
</comment>
<comment type="pathway">
    <text evidence="1">Amino-acid biosynthesis; L-methionine biosynthesis via salvage pathway; S-methyl-5-thio-alpha-D-ribose 1-phosphate from S-methyl-5'-thioadenosine (hydrolase route): step 1/2.</text>
</comment>
<comment type="subunit">
    <text evidence="1">Homodimer.</text>
</comment>
<comment type="similarity">
    <text evidence="1">Belongs to the PNP/UDP phosphorylase family. MtnN subfamily.</text>
</comment>
<name>MTNN_ECOL5</name>
<dbReference type="EC" id="3.2.2.9" evidence="1"/>
<dbReference type="EMBL" id="CP000247">
    <property type="protein sequence ID" value="ABG68209.1"/>
    <property type="molecule type" value="Genomic_DNA"/>
</dbReference>
<dbReference type="RefSeq" id="WP_000689844.1">
    <property type="nucleotide sequence ID" value="NC_008253.1"/>
</dbReference>
<dbReference type="SMR" id="Q0TLH2"/>
<dbReference type="GeneID" id="93777267"/>
<dbReference type="KEGG" id="ecp:ECP_0169"/>
<dbReference type="HOGENOM" id="CLU_031248_2_2_6"/>
<dbReference type="UniPathway" id="UPA00904">
    <property type="reaction ID" value="UER00871"/>
</dbReference>
<dbReference type="Proteomes" id="UP000009182">
    <property type="component" value="Chromosome"/>
</dbReference>
<dbReference type="GO" id="GO:0005829">
    <property type="term" value="C:cytosol"/>
    <property type="evidence" value="ECO:0007669"/>
    <property type="project" value="TreeGrafter"/>
</dbReference>
<dbReference type="GO" id="GO:0008782">
    <property type="term" value="F:adenosylhomocysteine nucleosidase activity"/>
    <property type="evidence" value="ECO:0007669"/>
    <property type="project" value="UniProtKB-UniRule"/>
</dbReference>
<dbReference type="GO" id="GO:0008930">
    <property type="term" value="F:methylthioadenosine nucleosidase activity"/>
    <property type="evidence" value="ECO:0007669"/>
    <property type="project" value="UniProtKB-UniRule"/>
</dbReference>
<dbReference type="GO" id="GO:0019509">
    <property type="term" value="P:L-methionine salvage from methylthioadenosine"/>
    <property type="evidence" value="ECO:0007669"/>
    <property type="project" value="UniProtKB-UniRule"/>
</dbReference>
<dbReference type="GO" id="GO:0019284">
    <property type="term" value="P:L-methionine salvage from S-adenosylmethionine"/>
    <property type="evidence" value="ECO:0007669"/>
    <property type="project" value="TreeGrafter"/>
</dbReference>
<dbReference type="GO" id="GO:0046124">
    <property type="term" value="P:purine deoxyribonucleoside catabolic process"/>
    <property type="evidence" value="ECO:0007669"/>
    <property type="project" value="UniProtKB-UniRule"/>
</dbReference>
<dbReference type="CDD" id="cd09008">
    <property type="entry name" value="MTAN"/>
    <property type="match status" value="1"/>
</dbReference>
<dbReference type="FunFam" id="3.40.50.1580:FF:000001">
    <property type="entry name" value="MTA/SAH nucleosidase family protein"/>
    <property type="match status" value="1"/>
</dbReference>
<dbReference type="Gene3D" id="3.40.50.1580">
    <property type="entry name" value="Nucleoside phosphorylase domain"/>
    <property type="match status" value="1"/>
</dbReference>
<dbReference type="HAMAP" id="MF_01684">
    <property type="entry name" value="Salvage_MtnN"/>
    <property type="match status" value="1"/>
</dbReference>
<dbReference type="InterPro" id="IPR010049">
    <property type="entry name" value="MTA_SAH_Nsdase"/>
</dbReference>
<dbReference type="InterPro" id="IPR000845">
    <property type="entry name" value="Nucleoside_phosphorylase_d"/>
</dbReference>
<dbReference type="InterPro" id="IPR035994">
    <property type="entry name" value="Nucleoside_phosphorylase_sf"/>
</dbReference>
<dbReference type="NCBIfam" id="TIGR01704">
    <property type="entry name" value="MTA_SAH-Nsdase"/>
    <property type="match status" value="1"/>
</dbReference>
<dbReference type="NCBIfam" id="NF004079">
    <property type="entry name" value="PRK05584.1"/>
    <property type="match status" value="1"/>
</dbReference>
<dbReference type="PANTHER" id="PTHR46832">
    <property type="entry name" value="5'-METHYLTHIOADENOSINE/S-ADENOSYLHOMOCYSTEINE NUCLEOSIDASE"/>
    <property type="match status" value="1"/>
</dbReference>
<dbReference type="PANTHER" id="PTHR46832:SF1">
    <property type="entry name" value="5'-METHYLTHIOADENOSINE_S-ADENOSYLHOMOCYSTEINE NUCLEOSIDASE"/>
    <property type="match status" value="1"/>
</dbReference>
<dbReference type="Pfam" id="PF01048">
    <property type="entry name" value="PNP_UDP_1"/>
    <property type="match status" value="1"/>
</dbReference>
<dbReference type="SUPFAM" id="SSF53167">
    <property type="entry name" value="Purine and uridine phosphorylases"/>
    <property type="match status" value="1"/>
</dbReference>
<gene>
    <name evidence="1" type="primary">mtnN</name>
    <name type="ordered locus">ECP_0169</name>
</gene>
<keyword id="KW-0028">Amino-acid biosynthesis</keyword>
<keyword id="KW-0378">Hydrolase</keyword>
<keyword id="KW-0486">Methionine biosynthesis</keyword>
<sequence length="232" mass="24354">MKIGIIGAMEEEVTLLRDKIENRQTISLGGCEIYTGQLNGTEVALLKSGIGKVAAALGATLLLEHCKPDVIINTGSAGGLAPTLKVGDIVVSDEARYHDADVTAFGYEYGQLPGCPAGFKADDKLIAAAEACIAELNLNAVRGLIVSGDAFINGSVGLAKIRHNFPQAIAVEMEATAIAHVCHNFNVPFVVVRAISDVADQQSHLSFDEFLAVAAKQSSLMVESLVQKLAHG</sequence>
<accession>Q0TLH2</accession>
<reference key="1">
    <citation type="journal article" date="2006" name="Mol. Microbiol.">
        <title>Role of pathogenicity island-associated integrases in the genome plasticity of uropathogenic Escherichia coli strain 536.</title>
        <authorList>
            <person name="Hochhut B."/>
            <person name="Wilde C."/>
            <person name="Balling G."/>
            <person name="Middendorf B."/>
            <person name="Dobrindt U."/>
            <person name="Brzuszkiewicz E."/>
            <person name="Gottschalk G."/>
            <person name="Carniel E."/>
            <person name="Hacker J."/>
        </authorList>
    </citation>
    <scope>NUCLEOTIDE SEQUENCE [LARGE SCALE GENOMIC DNA]</scope>
    <source>
        <strain>536 / UPEC</strain>
    </source>
</reference>
<evidence type="ECO:0000255" key="1">
    <source>
        <dbReference type="HAMAP-Rule" id="MF_01684"/>
    </source>
</evidence>
<organism>
    <name type="scientific">Escherichia coli O6:K15:H31 (strain 536 / UPEC)</name>
    <dbReference type="NCBI Taxonomy" id="362663"/>
    <lineage>
        <taxon>Bacteria</taxon>
        <taxon>Pseudomonadati</taxon>
        <taxon>Pseudomonadota</taxon>
        <taxon>Gammaproteobacteria</taxon>
        <taxon>Enterobacterales</taxon>
        <taxon>Enterobacteriaceae</taxon>
        <taxon>Escherichia</taxon>
    </lineage>
</organism>
<protein>
    <recommendedName>
        <fullName evidence="1">5'-methylthioadenosine/S-adenosylhomocysteine nucleosidase</fullName>
        <shortName evidence="1">MTA/SAH nucleosidase</shortName>
        <shortName evidence="1">MTAN</shortName>
        <ecNumber evidence="1">3.2.2.9</ecNumber>
    </recommendedName>
    <alternativeName>
        <fullName evidence="1">5'-deoxyadenosine nucleosidase</fullName>
        <shortName evidence="1">DOA nucleosidase</shortName>
        <shortName evidence="1">dAdo nucleosidase</shortName>
    </alternativeName>
    <alternativeName>
        <fullName evidence="1">5'-methylthioadenosine nucleosidase</fullName>
        <shortName evidence="1">MTA nucleosidase</shortName>
    </alternativeName>
    <alternativeName>
        <fullName evidence="1">S-adenosylhomocysteine nucleosidase</fullName>
        <shortName evidence="1">AdoHcy nucleosidase</shortName>
        <shortName evidence="1">SAH nucleosidase</shortName>
        <shortName evidence="1">SRH nucleosidase</shortName>
    </alternativeName>
</protein>
<proteinExistence type="inferred from homology"/>
<feature type="chain" id="PRO_0000359299" description="5'-methylthioadenosine/S-adenosylhomocysteine nucleosidase">
    <location>
        <begin position="1"/>
        <end position="232"/>
    </location>
</feature>
<feature type="active site" description="Proton acceptor" evidence="1">
    <location>
        <position position="12"/>
    </location>
</feature>
<feature type="active site" description="Proton donor" evidence="1">
    <location>
        <position position="197"/>
    </location>
</feature>
<feature type="binding site" evidence="1">
    <location>
        <position position="78"/>
    </location>
    <ligand>
        <name>substrate</name>
    </ligand>
</feature>
<feature type="binding site" evidence="1">
    <location>
        <position position="152"/>
    </location>
    <ligand>
        <name>substrate</name>
    </ligand>
</feature>
<feature type="binding site" evidence="1">
    <location>
        <begin position="173"/>
        <end position="174"/>
    </location>
    <ligand>
        <name>substrate</name>
    </ligand>
</feature>